<sequence length="446" mass="50147">MSIQIKQSTMVRPAEETPNKSLWLSKIDMILRTPYSHTGAVLIYKQPDNNEDNIHPSSSMYFDANILIEALSKALVPYYPMAGRLKINGDRYEIDCNAEGALFVEAESSHVLEDFGDFRPNDELHRVMVPTCDYSKGISSFPLLMVQLTRFRCGGVSIGFAQHHHACDGMSHFEFNNSWARIAKGLLPALEPVHDRYLHLRLRNPPQIKYTHSQFEPFVPSLPNELLDGKTNKSQTLFKLSREQINTLKQKLDLSSNTTTRLSTYEVVAGHVWRSVSKARGLSDHEEIKLIMPVDGRSRINNPSLPKGYCGNVVFLAVCTATVGDLSCNPLTDTAGKVQEALKGLDDDYLRSAIDHTESKPDLPVPYMGSPEKTLYPNVLVNSWGRIPYQAMDFGWGSPTFFGISNIFYDGQCFLIPSQNGDGSMTLAINLFSSHLSLFKKYFYDF</sequence>
<keyword id="KW-0012">Acyltransferase</keyword>
<keyword id="KW-0903">Direct protein sequencing</keyword>
<keyword id="KW-0284">Flavonoid biosynthesis</keyword>
<keyword id="KW-0808">Transferase</keyword>
<dbReference type="EC" id="2.3.1.144"/>
<dbReference type="EMBL" id="Z84386">
    <property type="protein sequence ID" value="CAB06430.1"/>
    <property type="molecule type" value="mRNA"/>
</dbReference>
<dbReference type="EMBL" id="Z98758">
    <property type="protein sequence ID" value="CAB11466.1"/>
    <property type="molecule type" value="Genomic_DNA"/>
</dbReference>
<dbReference type="PIR" id="T10711">
    <property type="entry name" value="T10711"/>
</dbReference>
<dbReference type="SMR" id="O23917"/>
<dbReference type="BioCyc" id="MetaCyc:MONOMER-15061"/>
<dbReference type="UniPathway" id="UPA00900"/>
<dbReference type="GO" id="GO:0047672">
    <property type="term" value="F:anthranilate N-benzoyltransferase activity"/>
    <property type="evidence" value="ECO:0007669"/>
    <property type="project" value="UniProtKB-EC"/>
</dbReference>
<dbReference type="GO" id="GO:0009813">
    <property type="term" value="P:flavonoid biosynthetic process"/>
    <property type="evidence" value="ECO:0007669"/>
    <property type="project" value="UniProtKB-KW"/>
</dbReference>
<dbReference type="FunFam" id="3.30.559.10:FF:000008">
    <property type="entry name" value="Tryptamine hydroxycinnamoyl transferase"/>
    <property type="match status" value="1"/>
</dbReference>
<dbReference type="Gene3D" id="3.30.559.10">
    <property type="entry name" value="Chloramphenicol acetyltransferase-like domain"/>
    <property type="match status" value="2"/>
</dbReference>
<dbReference type="InterPro" id="IPR023213">
    <property type="entry name" value="CAT-like_dom_sf"/>
</dbReference>
<dbReference type="InterPro" id="IPR050317">
    <property type="entry name" value="Plant_Fungal_Acyltransferase"/>
</dbReference>
<dbReference type="PANTHER" id="PTHR31642:SF11">
    <property type="entry name" value="SHIKIMATE O-HYDROXYCINNAMOYLTRANSFERASE"/>
    <property type="match status" value="1"/>
</dbReference>
<dbReference type="PANTHER" id="PTHR31642">
    <property type="entry name" value="TRICHOTHECENE 3-O-ACETYLTRANSFERASE"/>
    <property type="match status" value="1"/>
</dbReference>
<dbReference type="Pfam" id="PF02458">
    <property type="entry name" value="Transferase"/>
    <property type="match status" value="1"/>
</dbReference>
<name>HCBT2_DIACA</name>
<feature type="chain" id="PRO_0000147364" description="Anthranilate N-benzoyltransferase protein 2">
    <location>
        <begin position="1"/>
        <end position="446"/>
    </location>
</feature>
<feature type="active site" description="Proton acceptor" evidence="1">
    <location>
        <position position="164"/>
    </location>
</feature>
<feature type="active site" description="Proton acceptor" evidence="1">
    <location>
        <position position="393"/>
    </location>
</feature>
<evidence type="ECO:0000255" key="1"/>
<evidence type="ECO:0000269" key="2">
    <source>
    </source>
</evidence>
<evidence type="ECO:0000269" key="3">
    <source>
    </source>
</evidence>
<evidence type="ECO:0000305" key="4"/>
<proteinExistence type="evidence at protein level"/>
<reference key="1">
    <citation type="journal article" date="1997" name="Plant Mol. Biol.">
        <title>Characterization and heterologous expression of hydroxycinnamoyl/benzoyl-CoA:anthranilate N-hydroxycinnamoyl/benzoyltransferase from elicited cell cultures of carnation, Dianthus caryophyllus L.</title>
        <authorList>
            <person name="Yang Q."/>
            <person name="Reinhard K."/>
            <person name="Schiltz E."/>
            <person name="Matern U."/>
        </authorList>
    </citation>
    <scope>NUCLEOTIDE SEQUENCE [MRNA]</scope>
    <scope>PROTEIN SEQUENCE OF 7-18; 27-45; 74-84; 204-230; 300-307; 344-369 AND 374-386</scope>
    <scope>FUNCTION</scope>
</reference>
<reference key="2">
    <citation type="journal article" date="1998" name="Plant Mol. Biol.">
        <title>Anthranilate N-hydroxycinnamoyl/benzoyltransferase gene from carnation: rapid elicitation of transcription and promoter analysis.</title>
        <authorList>
            <person name="Yang Q."/>
            <person name="Grimmig B."/>
            <person name="Matern U."/>
        </authorList>
    </citation>
    <scope>INDUCTION</scope>
</reference>
<protein>
    <recommendedName>
        <fullName>Anthranilate N-benzoyltransferase protein 2</fullName>
        <ecNumber>2.3.1.144</ecNumber>
    </recommendedName>
    <alternativeName>
        <fullName>Anthranilate N-hydroxycinnamoyl/benzoyltransferase 2</fullName>
    </alternativeName>
</protein>
<comment type="function">
    <text evidence="2">Catalyzes the formation of N-benzoylanthranilate, in the course of methoxydianthramide B, a phytoalexin. Phytoalexins are produced in response to infection by parasites, and are essential for the expression of disease resistance.</text>
</comment>
<comment type="catalytic activity">
    <reaction>
        <text>anthranilate + benzoyl-CoA = N-benzoylanthranilate + CoA</text>
        <dbReference type="Rhea" id="RHEA:21600"/>
        <dbReference type="ChEBI" id="CHEBI:16567"/>
        <dbReference type="ChEBI" id="CHEBI:17331"/>
        <dbReference type="ChEBI" id="CHEBI:57287"/>
        <dbReference type="ChEBI" id="CHEBI:57369"/>
        <dbReference type="EC" id="2.3.1.144"/>
    </reaction>
</comment>
<comment type="pathway">
    <text>Phytoalexin biosynthesis; methoxydianthramide B biosynthesis.</text>
</comment>
<comment type="induction">
    <text evidence="3">By fungal elicitors. Elicitation triggers a rapid, transient induction, reaching maximal abundances within about 0.5 hours and returning to basal levels within 4 hours.</text>
</comment>
<comment type="PTM">
    <text evidence="4">N-terminus is blocked.</text>
</comment>
<comment type="similarity">
    <text evidence="4">Belongs to the plant acyltransferase family.</text>
</comment>
<organism>
    <name type="scientific">Dianthus caryophyllus</name>
    <name type="common">Carnation</name>
    <name type="synonym">Clove pink</name>
    <dbReference type="NCBI Taxonomy" id="3570"/>
    <lineage>
        <taxon>Eukaryota</taxon>
        <taxon>Viridiplantae</taxon>
        <taxon>Streptophyta</taxon>
        <taxon>Embryophyta</taxon>
        <taxon>Tracheophyta</taxon>
        <taxon>Spermatophyta</taxon>
        <taxon>Magnoliopsida</taxon>
        <taxon>eudicotyledons</taxon>
        <taxon>Gunneridae</taxon>
        <taxon>Pentapetalae</taxon>
        <taxon>Caryophyllales</taxon>
        <taxon>Caryophyllaceae</taxon>
        <taxon>Caryophylleae</taxon>
        <taxon>Dianthus</taxon>
    </lineage>
</organism>
<accession>O23917</accession>
<gene>
    <name type="primary">HCBT2</name>
</gene>